<gene>
    <name evidence="1" type="primary">rplF</name>
    <name type="ordered locus">Dole_0723</name>
</gene>
<feature type="chain" id="PRO_1000143977" description="Large ribosomal subunit protein uL6">
    <location>
        <begin position="1"/>
        <end position="176"/>
    </location>
</feature>
<feature type="region of interest" description="Disordered" evidence="2">
    <location>
        <begin position="151"/>
        <end position="176"/>
    </location>
</feature>
<feature type="compositionally biased region" description="Basic and acidic residues" evidence="2">
    <location>
        <begin position="151"/>
        <end position="169"/>
    </location>
</feature>
<dbReference type="EMBL" id="CP000859">
    <property type="protein sequence ID" value="ABW66533.1"/>
    <property type="molecule type" value="Genomic_DNA"/>
</dbReference>
<dbReference type="RefSeq" id="WP_012174151.1">
    <property type="nucleotide sequence ID" value="NC_009943.1"/>
</dbReference>
<dbReference type="SMR" id="A8ZV72"/>
<dbReference type="STRING" id="96561.Dole_0723"/>
<dbReference type="KEGG" id="dol:Dole_0723"/>
<dbReference type="eggNOG" id="COG0097">
    <property type="taxonomic scope" value="Bacteria"/>
</dbReference>
<dbReference type="HOGENOM" id="CLU_065464_1_2_7"/>
<dbReference type="OrthoDB" id="9805007at2"/>
<dbReference type="Proteomes" id="UP000008561">
    <property type="component" value="Chromosome"/>
</dbReference>
<dbReference type="GO" id="GO:0022625">
    <property type="term" value="C:cytosolic large ribosomal subunit"/>
    <property type="evidence" value="ECO:0007669"/>
    <property type="project" value="TreeGrafter"/>
</dbReference>
<dbReference type="GO" id="GO:0019843">
    <property type="term" value="F:rRNA binding"/>
    <property type="evidence" value="ECO:0007669"/>
    <property type="project" value="UniProtKB-UniRule"/>
</dbReference>
<dbReference type="GO" id="GO:0003735">
    <property type="term" value="F:structural constituent of ribosome"/>
    <property type="evidence" value="ECO:0007669"/>
    <property type="project" value="InterPro"/>
</dbReference>
<dbReference type="GO" id="GO:0002181">
    <property type="term" value="P:cytoplasmic translation"/>
    <property type="evidence" value="ECO:0007669"/>
    <property type="project" value="TreeGrafter"/>
</dbReference>
<dbReference type="FunFam" id="3.90.930.12:FF:000001">
    <property type="entry name" value="50S ribosomal protein L6"/>
    <property type="match status" value="1"/>
</dbReference>
<dbReference type="Gene3D" id="3.90.930.12">
    <property type="entry name" value="Ribosomal protein L6, alpha-beta domain"/>
    <property type="match status" value="2"/>
</dbReference>
<dbReference type="HAMAP" id="MF_01365_B">
    <property type="entry name" value="Ribosomal_uL6_B"/>
    <property type="match status" value="1"/>
</dbReference>
<dbReference type="InterPro" id="IPR000702">
    <property type="entry name" value="Ribosomal_uL6-like"/>
</dbReference>
<dbReference type="InterPro" id="IPR036789">
    <property type="entry name" value="Ribosomal_uL6-like_a/b-dom_sf"/>
</dbReference>
<dbReference type="InterPro" id="IPR020040">
    <property type="entry name" value="Ribosomal_uL6_a/b-dom"/>
</dbReference>
<dbReference type="InterPro" id="IPR019906">
    <property type="entry name" value="Ribosomal_uL6_bac-type"/>
</dbReference>
<dbReference type="NCBIfam" id="TIGR03654">
    <property type="entry name" value="L6_bact"/>
    <property type="match status" value="1"/>
</dbReference>
<dbReference type="PANTHER" id="PTHR11655">
    <property type="entry name" value="60S/50S RIBOSOMAL PROTEIN L6/L9"/>
    <property type="match status" value="1"/>
</dbReference>
<dbReference type="PANTHER" id="PTHR11655:SF14">
    <property type="entry name" value="LARGE RIBOSOMAL SUBUNIT PROTEIN UL6M"/>
    <property type="match status" value="1"/>
</dbReference>
<dbReference type="Pfam" id="PF00347">
    <property type="entry name" value="Ribosomal_L6"/>
    <property type="match status" value="2"/>
</dbReference>
<dbReference type="PIRSF" id="PIRSF002162">
    <property type="entry name" value="Ribosomal_L6"/>
    <property type="match status" value="1"/>
</dbReference>
<dbReference type="PRINTS" id="PR00059">
    <property type="entry name" value="RIBOSOMALL6"/>
</dbReference>
<dbReference type="SUPFAM" id="SSF56053">
    <property type="entry name" value="Ribosomal protein L6"/>
    <property type="match status" value="2"/>
</dbReference>
<proteinExistence type="inferred from homology"/>
<accession>A8ZV72</accession>
<keyword id="KW-1185">Reference proteome</keyword>
<keyword id="KW-0687">Ribonucleoprotein</keyword>
<keyword id="KW-0689">Ribosomal protein</keyword>
<keyword id="KW-0694">RNA-binding</keyword>
<keyword id="KW-0699">rRNA-binding</keyword>
<comment type="function">
    <text evidence="1">This protein binds to the 23S rRNA, and is important in its secondary structure. It is located near the subunit interface in the base of the L7/L12 stalk, and near the tRNA binding site of the peptidyltransferase center.</text>
</comment>
<comment type="subunit">
    <text evidence="1">Part of the 50S ribosomal subunit.</text>
</comment>
<comment type="similarity">
    <text evidence="1">Belongs to the universal ribosomal protein uL6 family.</text>
</comment>
<protein>
    <recommendedName>
        <fullName evidence="1">Large ribosomal subunit protein uL6</fullName>
    </recommendedName>
    <alternativeName>
        <fullName evidence="3">50S ribosomal protein L6</fullName>
    </alternativeName>
</protein>
<reference key="1">
    <citation type="submission" date="2007-10" db="EMBL/GenBank/DDBJ databases">
        <title>Complete sequence of Desulfococcus oleovorans Hxd3.</title>
        <authorList>
            <consortium name="US DOE Joint Genome Institute"/>
            <person name="Copeland A."/>
            <person name="Lucas S."/>
            <person name="Lapidus A."/>
            <person name="Barry K."/>
            <person name="Glavina del Rio T."/>
            <person name="Dalin E."/>
            <person name="Tice H."/>
            <person name="Pitluck S."/>
            <person name="Kiss H."/>
            <person name="Brettin T."/>
            <person name="Bruce D."/>
            <person name="Detter J.C."/>
            <person name="Han C."/>
            <person name="Schmutz J."/>
            <person name="Larimer F."/>
            <person name="Land M."/>
            <person name="Hauser L."/>
            <person name="Kyrpides N."/>
            <person name="Kim E."/>
            <person name="Wawrik B."/>
            <person name="Richardson P."/>
        </authorList>
    </citation>
    <scope>NUCLEOTIDE SEQUENCE [LARGE SCALE GENOMIC DNA]</scope>
    <source>
        <strain>DSM 6200 / JCM 39069 / Hxd3</strain>
    </source>
</reference>
<name>RL6_DESOH</name>
<organism>
    <name type="scientific">Desulfosudis oleivorans (strain DSM 6200 / JCM 39069 / Hxd3)</name>
    <name type="common">Desulfococcus oleovorans</name>
    <dbReference type="NCBI Taxonomy" id="96561"/>
    <lineage>
        <taxon>Bacteria</taxon>
        <taxon>Pseudomonadati</taxon>
        <taxon>Thermodesulfobacteriota</taxon>
        <taxon>Desulfobacteria</taxon>
        <taxon>Desulfobacterales</taxon>
        <taxon>Desulfosudaceae</taxon>
        <taxon>Desulfosudis</taxon>
    </lineage>
</organism>
<sequence>MARIGKKPIQVPDKVKVSYTDRCITVSSDKGVLSRTVQGDVDLEIKEDHIHVVAGSENRKVLALQGLYRSLVNNMVQGVSTGFSRSLEINGIGYRVELNGQTVVLNIGYSHPINFELPDGVTAKVEKNVLTLASIDKELLGQTAASIRKLRPPEPYKGRGIKYTDEHIQRKAGKTK</sequence>
<evidence type="ECO:0000255" key="1">
    <source>
        <dbReference type="HAMAP-Rule" id="MF_01365"/>
    </source>
</evidence>
<evidence type="ECO:0000256" key="2">
    <source>
        <dbReference type="SAM" id="MobiDB-lite"/>
    </source>
</evidence>
<evidence type="ECO:0000305" key="3"/>